<reference key="1">
    <citation type="submission" date="2006-11" db="EMBL/GenBank/DDBJ databases">
        <title>Sequence of Campylobacter fetus subsp. fetus 82-40.</title>
        <authorList>
            <person name="Fouts D.E."/>
            <person name="Nelson K.E."/>
        </authorList>
    </citation>
    <scope>NUCLEOTIDE SEQUENCE [LARGE SCALE GENOMIC DNA]</scope>
    <source>
        <strain>82-40</strain>
    </source>
</reference>
<keyword id="KW-0997">Cell inner membrane</keyword>
<keyword id="KW-1003">Cell membrane</keyword>
<keyword id="KW-0472">Membrane</keyword>
<keyword id="KW-0511">Multifunctional enzyme</keyword>
<keyword id="KW-0520">NAD</keyword>
<keyword id="KW-0874">Quinone</keyword>
<keyword id="KW-1278">Translocase</keyword>
<keyword id="KW-0813">Transport</keyword>
<keyword id="KW-0830">Ubiquinone</keyword>
<feature type="chain" id="PRO_0000358625" description="NADH-quinone oxidoreductase subunit C/D">
    <location>
        <begin position="1"/>
        <end position="561"/>
    </location>
</feature>
<feature type="region of interest" description="NADH dehydrogenase I subunit C" evidence="2">
    <location>
        <begin position="1"/>
        <end position="152"/>
    </location>
</feature>
<feature type="region of interest" description="NADH dehydrogenase I subunit D" evidence="2">
    <location>
        <begin position="176"/>
        <end position="561"/>
    </location>
</feature>
<sequence length="561" mass="64196">MLEKFSSKFNVLKHSTTNGLLSVQINPNDIYEAVLFVRDNIGFEILADIVCVDNLYIDKEKRFSLYYIFRKISSENLCIYIDIDINQSVKSVESIYKSANWGERECFDQFGVKFENHPNLKRILNHKDFQGYPLRKDYPITKYQVLYESDDLVGEMKNEMQRAGLASEENDEFKTKYTFLNIGPSHPATHGTIRNFVALDGEKIISCVTEIGYLHRGFEKACENHSYAQIIPYTDRLNYCSAMLNNVGYAKAVEEALGLNLPDRGIFMRVILGELARIIDHEVCLGAMFVDMGGLTNYWYLYNPRERIYNFLSKLTGARFTNSFARIGGMANDFYDGWKEELLAHLKDVEKGVDDTMILIEKNRIFLDRVQNICKINANDALSYGFSGPNLRASGVSFDLRKDKPYYYYDSFDFSVPVGSEGDIYDRMFVRFFEMRESISIIRQAIKLIPEGKISVDDKDVFLPSKDQVYSNIESLINHFKLIFDGIKLPNGHFYSASEGANGELGFFIFSNSEPNPYRVKLRPPCFYALNAFSSMVQGSLIADSILNLGSLNIIAGELDR</sequence>
<gene>
    <name evidence="2" type="primary">nuoC</name>
    <name type="synonym">nuoCD</name>
    <name type="synonym">nuoD</name>
    <name type="ordered locus">CFF8240_0159</name>
</gene>
<proteinExistence type="inferred from homology"/>
<name>NUOCD_CAMFF</name>
<evidence type="ECO:0000250" key="1"/>
<evidence type="ECO:0000255" key="2">
    <source>
        <dbReference type="HAMAP-Rule" id="MF_01397"/>
    </source>
</evidence>
<comment type="function">
    <text evidence="2">NDH-1 shuttles electrons from NADH, via FMN and iron-sulfur (Fe-S) centers, to quinones in the respiratory chain. The immediate electron acceptor for the enzyme in this species is believed to be ubiquinone. Couples the redox reaction to proton translocation (for every two electrons transferred, four hydrogen ions are translocated across the cytoplasmic membrane), and thus conserves the redox energy in a proton gradient.</text>
</comment>
<comment type="catalytic activity">
    <reaction evidence="2">
        <text>a quinone + NADH + 5 H(+)(in) = a quinol + NAD(+) + 4 H(+)(out)</text>
        <dbReference type="Rhea" id="RHEA:57888"/>
        <dbReference type="ChEBI" id="CHEBI:15378"/>
        <dbReference type="ChEBI" id="CHEBI:24646"/>
        <dbReference type="ChEBI" id="CHEBI:57540"/>
        <dbReference type="ChEBI" id="CHEBI:57945"/>
        <dbReference type="ChEBI" id="CHEBI:132124"/>
    </reaction>
</comment>
<comment type="subunit">
    <text evidence="2">NDH-1 is composed of 13 different subunits. Subunits NuoB, CD, E, F, and G constitute the peripheral sector of the complex.</text>
</comment>
<comment type="subcellular location">
    <subcellularLocation>
        <location evidence="2">Cell inner membrane</location>
        <topology evidence="2">Peripheral membrane protein</topology>
        <orientation evidence="1">Cytoplasmic side</orientation>
    </subcellularLocation>
</comment>
<comment type="similarity">
    <text evidence="2">In the N-terminal section; belongs to the complex I 30 kDa subunit family.</text>
</comment>
<comment type="similarity">
    <text evidence="2">In the C-terminal section; belongs to the complex I 49 kDa subunit family.</text>
</comment>
<accession>A0RMD1</accession>
<protein>
    <recommendedName>
        <fullName evidence="2">NADH-quinone oxidoreductase subunit C/D</fullName>
        <ecNumber evidence="2">7.1.1.-</ecNumber>
    </recommendedName>
    <alternativeName>
        <fullName evidence="2">NADH dehydrogenase I subunit C/D</fullName>
    </alternativeName>
    <alternativeName>
        <fullName evidence="2">NDH-1 subunit C/D</fullName>
    </alternativeName>
</protein>
<dbReference type="EC" id="7.1.1.-" evidence="2"/>
<dbReference type="EMBL" id="CP000487">
    <property type="protein sequence ID" value="ABK82000.1"/>
    <property type="molecule type" value="Genomic_DNA"/>
</dbReference>
<dbReference type="RefSeq" id="WP_002848154.1">
    <property type="nucleotide sequence ID" value="NC_008599.1"/>
</dbReference>
<dbReference type="SMR" id="A0RMD1"/>
<dbReference type="KEGG" id="cff:CFF8240_0159"/>
<dbReference type="eggNOG" id="COG0649">
    <property type="taxonomic scope" value="Bacteria"/>
</dbReference>
<dbReference type="HOGENOM" id="CLU_015134_3_2_7"/>
<dbReference type="Proteomes" id="UP000000760">
    <property type="component" value="Chromosome"/>
</dbReference>
<dbReference type="GO" id="GO:0030964">
    <property type="term" value="C:NADH dehydrogenase complex"/>
    <property type="evidence" value="ECO:0007669"/>
    <property type="project" value="InterPro"/>
</dbReference>
<dbReference type="GO" id="GO:0005886">
    <property type="term" value="C:plasma membrane"/>
    <property type="evidence" value="ECO:0007669"/>
    <property type="project" value="UniProtKB-SubCell"/>
</dbReference>
<dbReference type="GO" id="GO:0051287">
    <property type="term" value="F:NAD binding"/>
    <property type="evidence" value="ECO:0007669"/>
    <property type="project" value="InterPro"/>
</dbReference>
<dbReference type="GO" id="GO:0008137">
    <property type="term" value="F:NADH dehydrogenase (ubiquinone) activity"/>
    <property type="evidence" value="ECO:0007669"/>
    <property type="project" value="InterPro"/>
</dbReference>
<dbReference type="GO" id="GO:0050136">
    <property type="term" value="F:NADH:ubiquinone reductase (non-electrogenic) activity"/>
    <property type="evidence" value="ECO:0007669"/>
    <property type="project" value="UniProtKB-UniRule"/>
</dbReference>
<dbReference type="GO" id="GO:0048038">
    <property type="term" value="F:quinone binding"/>
    <property type="evidence" value="ECO:0007669"/>
    <property type="project" value="UniProtKB-KW"/>
</dbReference>
<dbReference type="Gene3D" id="1.10.645.10">
    <property type="entry name" value="Cytochrome-c3 Hydrogenase, chain B"/>
    <property type="match status" value="1"/>
</dbReference>
<dbReference type="Gene3D" id="3.30.460.80">
    <property type="entry name" value="NADH:ubiquinone oxidoreductase, 30kDa subunit"/>
    <property type="match status" value="1"/>
</dbReference>
<dbReference type="HAMAP" id="MF_01397">
    <property type="entry name" value="NDH1_NuoCD_2"/>
    <property type="match status" value="1"/>
</dbReference>
<dbReference type="HAMAP" id="MF_01358">
    <property type="entry name" value="NDH1_NuoD"/>
    <property type="match status" value="1"/>
</dbReference>
<dbReference type="InterPro" id="IPR001135">
    <property type="entry name" value="NADH_Q_OxRdtase_suD"/>
</dbReference>
<dbReference type="InterPro" id="IPR037232">
    <property type="entry name" value="NADH_quin_OxRdtase_su_C/D-like"/>
</dbReference>
<dbReference type="InterPro" id="IPR001268">
    <property type="entry name" value="NADH_UbQ_OxRdtase_30kDa_su"/>
</dbReference>
<dbReference type="InterPro" id="IPR026662">
    <property type="entry name" value="NDH-1_subunit_CD"/>
</dbReference>
<dbReference type="InterPro" id="IPR022885">
    <property type="entry name" value="NDH1_su_D/H"/>
</dbReference>
<dbReference type="InterPro" id="IPR029014">
    <property type="entry name" value="NiFe-Hase_large"/>
</dbReference>
<dbReference type="NCBIfam" id="NF004739">
    <property type="entry name" value="PRK06075.1"/>
    <property type="match status" value="1"/>
</dbReference>
<dbReference type="PANTHER" id="PTHR11993:SF10">
    <property type="entry name" value="NADH DEHYDROGENASE [UBIQUINONE] IRON-SULFUR PROTEIN 2, MITOCHONDRIAL"/>
    <property type="match status" value="1"/>
</dbReference>
<dbReference type="PANTHER" id="PTHR11993">
    <property type="entry name" value="NADH-UBIQUINONE OXIDOREDUCTASE 49 KDA SUBUNIT"/>
    <property type="match status" value="1"/>
</dbReference>
<dbReference type="Pfam" id="PF00329">
    <property type="entry name" value="Complex1_30kDa"/>
    <property type="match status" value="1"/>
</dbReference>
<dbReference type="Pfam" id="PF00346">
    <property type="entry name" value="Complex1_49kDa"/>
    <property type="match status" value="1"/>
</dbReference>
<dbReference type="SUPFAM" id="SSF56762">
    <property type="entry name" value="HydB/Nqo4-like"/>
    <property type="match status" value="1"/>
</dbReference>
<dbReference type="SUPFAM" id="SSF143243">
    <property type="entry name" value="Nqo5-like"/>
    <property type="match status" value="1"/>
</dbReference>
<organism>
    <name type="scientific">Campylobacter fetus subsp. fetus (strain 82-40)</name>
    <dbReference type="NCBI Taxonomy" id="360106"/>
    <lineage>
        <taxon>Bacteria</taxon>
        <taxon>Pseudomonadati</taxon>
        <taxon>Campylobacterota</taxon>
        <taxon>Epsilonproteobacteria</taxon>
        <taxon>Campylobacterales</taxon>
        <taxon>Campylobacteraceae</taxon>
        <taxon>Campylobacter</taxon>
    </lineage>
</organism>